<proteinExistence type="inferred from homology"/>
<gene>
    <name type="primary">arcC2</name>
    <name type="ordered locus">SACOL2654</name>
</gene>
<comment type="catalytic activity">
    <reaction>
        <text>hydrogencarbonate + NH4(+) + ATP = carbamoyl phosphate + ADP + H2O + H(+)</text>
        <dbReference type="Rhea" id="RHEA:10152"/>
        <dbReference type="ChEBI" id="CHEBI:15377"/>
        <dbReference type="ChEBI" id="CHEBI:15378"/>
        <dbReference type="ChEBI" id="CHEBI:17544"/>
        <dbReference type="ChEBI" id="CHEBI:28938"/>
        <dbReference type="ChEBI" id="CHEBI:30616"/>
        <dbReference type="ChEBI" id="CHEBI:58228"/>
        <dbReference type="ChEBI" id="CHEBI:456216"/>
        <dbReference type="EC" id="2.7.2.2"/>
    </reaction>
</comment>
<comment type="pathway">
    <text>Metabolic intermediate metabolism; carbamoyl phosphate degradation; CO(2) and NH(3) from carbamoyl phosphate: step 1/1.</text>
</comment>
<comment type="subcellular location">
    <subcellularLocation>
        <location evidence="1">Cytoplasm</location>
    </subcellularLocation>
</comment>
<comment type="similarity">
    <text evidence="1">Belongs to the carbamate kinase family.</text>
</comment>
<sequence length="313" mass="34329">MKEKIVIALGGNAIQTTEATAEAQQTAIRCAMQNLKPLFDSPARIVISHGNGPQIGSLLIQQAKSNSDTTPAMPLDTCGAMSQGMIGYWLETEINRILTEMNSDRTVGTIVTRVEVDKDDPRFDNPTKPIGPFYTKEEVEELQKEQPDSVFKEDAGRGYRKVVASPLPQSILEHQLIRTLADGKNIVIACGGGGIPVIKKENTYEGVEAVIDKDFASEKLATLIEADTLMILTNVENVFINFNEPNQQQIDDIDVATLKKYAAQGKFVEGSMLPKIEAAIRFVESGENKKVIITNLEQAYEALIGNKGTHIHM</sequence>
<protein>
    <recommendedName>
        <fullName>Carbamate kinase 2</fullName>
        <ecNumber>2.7.2.2</ecNumber>
    </recommendedName>
</protein>
<feature type="chain" id="PRO_0000185132" description="Carbamate kinase 2">
    <location>
        <begin position="1"/>
        <end position="313"/>
    </location>
</feature>
<name>ARCC2_STAAC</name>
<evidence type="ECO:0000305" key="1"/>
<reference key="1">
    <citation type="journal article" date="2005" name="J. Bacteriol.">
        <title>Insights on evolution of virulence and resistance from the complete genome analysis of an early methicillin-resistant Staphylococcus aureus strain and a biofilm-producing methicillin-resistant Staphylococcus epidermidis strain.</title>
        <authorList>
            <person name="Gill S.R."/>
            <person name="Fouts D.E."/>
            <person name="Archer G.L."/>
            <person name="Mongodin E.F."/>
            <person name="DeBoy R.T."/>
            <person name="Ravel J."/>
            <person name="Paulsen I.T."/>
            <person name="Kolonay J.F."/>
            <person name="Brinkac L.M."/>
            <person name="Beanan M.J."/>
            <person name="Dodson R.J."/>
            <person name="Daugherty S.C."/>
            <person name="Madupu R."/>
            <person name="Angiuoli S.V."/>
            <person name="Durkin A.S."/>
            <person name="Haft D.H."/>
            <person name="Vamathevan J.J."/>
            <person name="Khouri H."/>
            <person name="Utterback T.R."/>
            <person name="Lee C."/>
            <person name="Dimitrov G."/>
            <person name="Jiang L."/>
            <person name="Qin H."/>
            <person name="Weidman J."/>
            <person name="Tran K."/>
            <person name="Kang K.H."/>
            <person name="Hance I.R."/>
            <person name="Nelson K.E."/>
            <person name="Fraser C.M."/>
        </authorList>
    </citation>
    <scope>NUCLEOTIDE SEQUENCE [LARGE SCALE GENOMIC DNA]</scope>
    <source>
        <strain>COL</strain>
    </source>
</reference>
<accession>Q5HCR5</accession>
<keyword id="KW-0056">Arginine metabolism</keyword>
<keyword id="KW-0067">ATP-binding</keyword>
<keyword id="KW-0963">Cytoplasm</keyword>
<keyword id="KW-0418">Kinase</keyword>
<keyword id="KW-0547">Nucleotide-binding</keyword>
<keyword id="KW-0808">Transferase</keyword>
<organism>
    <name type="scientific">Staphylococcus aureus (strain COL)</name>
    <dbReference type="NCBI Taxonomy" id="93062"/>
    <lineage>
        <taxon>Bacteria</taxon>
        <taxon>Bacillati</taxon>
        <taxon>Bacillota</taxon>
        <taxon>Bacilli</taxon>
        <taxon>Bacillales</taxon>
        <taxon>Staphylococcaceae</taxon>
        <taxon>Staphylococcus</taxon>
    </lineage>
</organism>
<dbReference type="EC" id="2.7.2.2"/>
<dbReference type="EMBL" id="CP000046">
    <property type="protein sequence ID" value="AAW38652.1"/>
    <property type="molecule type" value="Genomic_DNA"/>
</dbReference>
<dbReference type="SMR" id="Q5HCR5"/>
<dbReference type="KEGG" id="sac:SACOL2654"/>
<dbReference type="HOGENOM" id="CLU_076278_0_0_9"/>
<dbReference type="UniPathway" id="UPA00996">
    <property type="reaction ID" value="UER00366"/>
</dbReference>
<dbReference type="Proteomes" id="UP000000530">
    <property type="component" value="Chromosome"/>
</dbReference>
<dbReference type="GO" id="GO:0005829">
    <property type="term" value="C:cytosol"/>
    <property type="evidence" value="ECO:0007669"/>
    <property type="project" value="TreeGrafter"/>
</dbReference>
<dbReference type="GO" id="GO:0005524">
    <property type="term" value="F:ATP binding"/>
    <property type="evidence" value="ECO:0007669"/>
    <property type="project" value="UniProtKB-KW"/>
</dbReference>
<dbReference type="GO" id="GO:0008804">
    <property type="term" value="F:carbamate kinase activity"/>
    <property type="evidence" value="ECO:0007669"/>
    <property type="project" value="UniProtKB-EC"/>
</dbReference>
<dbReference type="GO" id="GO:0019546">
    <property type="term" value="P:arginine deiminase pathway"/>
    <property type="evidence" value="ECO:0007669"/>
    <property type="project" value="TreeGrafter"/>
</dbReference>
<dbReference type="CDD" id="cd04235">
    <property type="entry name" value="AAK_CK"/>
    <property type="match status" value="1"/>
</dbReference>
<dbReference type="FunFam" id="3.40.1160.10:FF:000007">
    <property type="entry name" value="Carbamate kinase"/>
    <property type="match status" value="1"/>
</dbReference>
<dbReference type="Gene3D" id="3.40.1160.10">
    <property type="entry name" value="Acetylglutamate kinase-like"/>
    <property type="match status" value="1"/>
</dbReference>
<dbReference type="InterPro" id="IPR036393">
    <property type="entry name" value="AceGlu_kinase-like_sf"/>
</dbReference>
<dbReference type="InterPro" id="IPR001048">
    <property type="entry name" value="Asp/Glu/Uridylate_kinase"/>
</dbReference>
<dbReference type="InterPro" id="IPR003964">
    <property type="entry name" value="Carb_kinase"/>
</dbReference>
<dbReference type="NCBIfam" id="TIGR00746">
    <property type="entry name" value="arcC"/>
    <property type="match status" value="1"/>
</dbReference>
<dbReference type="NCBIfam" id="NF009007">
    <property type="entry name" value="PRK12352.1"/>
    <property type="match status" value="1"/>
</dbReference>
<dbReference type="PANTHER" id="PTHR30409">
    <property type="entry name" value="CARBAMATE KINASE"/>
    <property type="match status" value="1"/>
</dbReference>
<dbReference type="PANTHER" id="PTHR30409:SF1">
    <property type="entry name" value="CARBAMATE KINASE-RELATED"/>
    <property type="match status" value="1"/>
</dbReference>
<dbReference type="Pfam" id="PF00696">
    <property type="entry name" value="AA_kinase"/>
    <property type="match status" value="1"/>
</dbReference>
<dbReference type="PIRSF" id="PIRSF000723">
    <property type="entry name" value="Carbamate_kin"/>
    <property type="match status" value="1"/>
</dbReference>
<dbReference type="PRINTS" id="PR01469">
    <property type="entry name" value="CARBMTKINASE"/>
</dbReference>
<dbReference type="SUPFAM" id="SSF53633">
    <property type="entry name" value="Carbamate kinase-like"/>
    <property type="match status" value="1"/>
</dbReference>